<comment type="function">
    <text evidence="1">Chromatin reader protein that specifically recognizes and binds histone H4 acetylated at 'Lys-5' and 'Lys-12' (H4K5ac and H4K12ac, respectively), thereby controlling gene expression and remodeling chromatin structures. Recruits transcription factors and coactivators to target gene sites, and activates RNA polymerase II machinery for transcriptional elongation. Plays a key role in genome compartmentalization via its association with CTCF and cohesin: recruited to chromatin by CTCF and promotes formation of topologically associating domains (TADs) via its ability to bind acetylated histones, contributing to CTCF boundary formation and enhancer insulation. Also recognizes and binds acetylated non-histone proteins, such as STAT3. Involved in inflammatory response by regulating differentiation of naive CD4(+) T-cells into T-helper Th17: recognizes and binds STAT3 acetylated at 'Lys-87', promoting STAT3 recruitment to chromatin. In addition to acetylated lysines, also recognizes and binds lysine residues on histones that are both methylated and acetylated on the same side chain to form N6-acetyl-N6-methyllysine (Kacme), an epigenetic mark of active chromatin associated with increased transcriptional initiation. Specifically binds histone H4 acetyl-methylated at 'Lys-5' and 'Lys-12' (H4K5acme and H4K12acme, respectively).</text>
</comment>
<comment type="subunit">
    <text evidence="1 2">Homodimer. Interacts with E2F1. Interacts with (acetylated) STAT3; promoting STAT3 recruitment to chromatin (By similarity). Interacts with CTCF; promoting BRD2 recruitment to chromatin (By similarity).</text>
</comment>
<comment type="subcellular location">
    <subcellularLocation>
        <location evidence="1">Nucleus</location>
    </subcellularLocation>
    <subcellularLocation>
        <location evidence="1">Chromosome</location>
    </subcellularLocation>
    <text evidence="1">Detected on chromatin and nucleosomes.</text>
</comment>
<comment type="domain">
    <text evidence="1">The first bromo domain specifically recognizes histone H4 acetylated at 'Lys-12' (H4K12ac). It also specifically binds histone H4 acetyl-methylated at 'Lys-5' and 'Lys-12' (H4K5acme and H4K12acme, respectively). The second bromo domain recognizes and binds histone H4 acetylated at 'Lys-5' and 'Lys-12' (H4K5ac and H4K12ac, respectively).</text>
</comment>
<comment type="similarity">
    <text evidence="7">Belongs to the BET family.</text>
</comment>
<feature type="chain" id="PRO_0000211179" description="Bromodomain-containing protein 2">
    <location>
        <begin position="1"/>
        <end position="803"/>
    </location>
</feature>
<feature type="domain" description="Bromo 1" evidence="4">
    <location>
        <begin position="74"/>
        <end position="180"/>
    </location>
</feature>
<feature type="domain" description="Bromo 2" evidence="4">
    <location>
        <begin position="344"/>
        <end position="453"/>
    </location>
</feature>
<feature type="domain" description="NET" evidence="5">
    <location>
        <begin position="634"/>
        <end position="716"/>
    </location>
</feature>
<feature type="region of interest" description="Disordered" evidence="6">
    <location>
        <begin position="1"/>
        <end position="28"/>
    </location>
</feature>
<feature type="region of interest" description="Disordered" evidence="6">
    <location>
        <begin position="53"/>
        <end position="73"/>
    </location>
</feature>
<feature type="region of interest" description="Disordered" evidence="6">
    <location>
        <begin position="268"/>
        <end position="349"/>
    </location>
</feature>
<feature type="region of interest" description="Disordered" evidence="6">
    <location>
        <begin position="456"/>
        <end position="653"/>
    </location>
</feature>
<feature type="region of interest" description="Disordered" evidence="6">
    <location>
        <begin position="739"/>
        <end position="803"/>
    </location>
</feature>
<feature type="short sequence motif" description="Nuclear localization signal" evidence="3">
    <location>
        <begin position="556"/>
        <end position="560"/>
    </location>
</feature>
<feature type="compositionally biased region" description="Low complexity" evidence="6">
    <location>
        <begin position="285"/>
        <end position="298"/>
    </location>
</feature>
<feature type="compositionally biased region" description="Basic and acidic residues" evidence="6">
    <location>
        <begin position="316"/>
        <end position="332"/>
    </location>
</feature>
<feature type="compositionally biased region" description="Acidic residues" evidence="6">
    <location>
        <begin position="481"/>
        <end position="515"/>
    </location>
</feature>
<feature type="compositionally biased region" description="Basic residues" evidence="6">
    <location>
        <begin position="545"/>
        <end position="567"/>
    </location>
</feature>
<feature type="compositionally biased region" description="Basic and acidic residues" evidence="6">
    <location>
        <begin position="641"/>
        <end position="652"/>
    </location>
</feature>
<feature type="compositionally biased region" description="Low complexity" evidence="6">
    <location>
        <begin position="777"/>
        <end position="797"/>
    </location>
</feature>
<feature type="binding site" evidence="1">
    <location>
        <position position="112"/>
    </location>
    <ligand>
        <name>a protein</name>
        <dbReference type="ChEBI" id="CHEBI:16541"/>
    </ligand>
    <ligandPart>
        <name>N(6)-acetyl-N(6)-methyl-L-lysine residue</name>
        <dbReference type="ChEBI" id="CHEBI:197459"/>
    </ligandPart>
</feature>
<feature type="binding site" evidence="1">
    <location>
        <position position="155"/>
    </location>
    <ligand>
        <name>a protein</name>
        <dbReference type="ChEBI" id="CHEBI:16541"/>
    </ligand>
    <ligandPart>
        <name>N(6)-acetyl-N(6)-methyl-L-lysine residue</name>
        <dbReference type="ChEBI" id="CHEBI:197459"/>
    </ligandPart>
</feature>
<feature type="binding site" evidence="1">
    <location>
        <position position="156"/>
    </location>
    <ligand>
        <name>a protein</name>
        <dbReference type="ChEBI" id="CHEBI:16541"/>
    </ligand>
    <ligandPart>
        <name>N(6)-acetyl-L-lysine residue</name>
        <dbReference type="ChEBI" id="CHEBI:61930"/>
    </ligandPart>
</feature>
<feature type="binding site" evidence="1">
    <location>
        <position position="156"/>
    </location>
    <ligand>
        <name>a protein</name>
        <dbReference type="ChEBI" id="CHEBI:16541"/>
    </ligand>
    <ligandPart>
        <name>N(6)-acetyl-N(6)-methyl-L-lysine residue</name>
        <dbReference type="ChEBI" id="CHEBI:197459"/>
    </ligandPart>
</feature>
<feature type="binding site" evidence="1">
    <location>
        <position position="157"/>
    </location>
    <ligand>
        <name>a protein</name>
        <dbReference type="ChEBI" id="CHEBI:16541"/>
    </ligand>
    <ligandPart>
        <name>N(6)-acetyl-N(6)-methyl-L-lysine residue</name>
        <dbReference type="ChEBI" id="CHEBI:197459"/>
    </ligandPart>
</feature>
<feature type="binding site" evidence="1">
    <location>
        <position position="160"/>
    </location>
    <ligand>
        <name>a protein</name>
        <dbReference type="ChEBI" id="CHEBI:16541"/>
    </ligand>
    <ligandPart>
        <name>N(6)-acetyl-L-lysine residue</name>
        <dbReference type="ChEBI" id="CHEBI:61930"/>
    </ligandPart>
</feature>
<feature type="binding site" evidence="1">
    <location>
        <position position="161"/>
    </location>
    <ligand>
        <name>a protein</name>
        <dbReference type="ChEBI" id="CHEBI:16541"/>
    </ligand>
    <ligandPart>
        <name>N(6)-acetyl-L-lysine residue</name>
        <dbReference type="ChEBI" id="CHEBI:61930"/>
    </ligandPart>
</feature>
<feature type="modified residue" description="N-acetylmethionine" evidence="1">
    <location>
        <position position="1"/>
    </location>
</feature>
<feature type="modified residue" description="Phosphothreonine" evidence="1">
    <location>
        <position position="6"/>
    </location>
</feature>
<feature type="modified residue" description="Phosphoserine" evidence="1">
    <location>
        <position position="37"/>
    </location>
</feature>
<feature type="modified residue" description="Phosphoserine" evidence="1">
    <location>
        <position position="298"/>
    </location>
</feature>
<feature type="modified residue" description="Phosphoserine" evidence="1">
    <location>
        <position position="301"/>
    </location>
</feature>
<feature type="modified residue" description="Phosphoserine" evidence="1">
    <location>
        <position position="305"/>
    </location>
</feature>
<feature type="modified residue" description="Phosphoserine" evidence="1">
    <location>
        <position position="635"/>
    </location>
</feature>
<reference key="1">
    <citation type="journal article" date="2005" name="Genomics">
        <title>Genomic sequence of the class II region of the canine MHC: comparison with the MHC of other mammalian species.</title>
        <authorList>
            <person name="Debenham S.L."/>
            <person name="Hart E.A."/>
            <person name="Ashurst J.L."/>
            <person name="Howe K.L."/>
            <person name="Quail M.A."/>
            <person name="Ollier W.E.R."/>
            <person name="Binns M.M."/>
        </authorList>
    </citation>
    <scope>NUCLEOTIDE SEQUENCE [LARGE SCALE GENOMIC DNA]</scope>
    <source>
        <strain>Doberman pinscher</strain>
    </source>
</reference>
<organism>
    <name type="scientific">Canis lupus familiaris</name>
    <name type="common">Dog</name>
    <name type="synonym">Canis familiaris</name>
    <dbReference type="NCBI Taxonomy" id="9615"/>
    <lineage>
        <taxon>Eukaryota</taxon>
        <taxon>Metazoa</taxon>
        <taxon>Chordata</taxon>
        <taxon>Craniata</taxon>
        <taxon>Vertebrata</taxon>
        <taxon>Euteleostomi</taxon>
        <taxon>Mammalia</taxon>
        <taxon>Eutheria</taxon>
        <taxon>Laurasiatheria</taxon>
        <taxon>Carnivora</taxon>
        <taxon>Caniformia</taxon>
        <taxon>Canidae</taxon>
        <taxon>Canis</taxon>
    </lineage>
</organism>
<keyword id="KW-0007">Acetylation</keyword>
<keyword id="KW-0103">Bromodomain</keyword>
<keyword id="KW-0156">Chromatin regulator</keyword>
<keyword id="KW-0158">Chromosome</keyword>
<keyword id="KW-0539">Nucleus</keyword>
<keyword id="KW-0597">Phosphoprotein</keyword>
<keyword id="KW-1185">Reference proteome</keyword>
<keyword id="KW-0677">Repeat</keyword>
<keyword id="KW-0804">Transcription</keyword>
<keyword id="KW-0805">Transcription regulation</keyword>
<sequence>MLQNVTPHSKLPGEGNAGLLGLGPEAAAPGKRIRKPSLLYEGFESPTMASVPALQLTPANPPPPEVSNPKKPGRVTNQLQYLHKVVMKALWKHQFAWPFRQPVDAVKLGLPDYHKIIKQPMDMGTIKRRLENNYYWAASECMQDFNTMFTNCYIYNKPTDDIVLMAQTLEKIFLQKVASMPQEEQELVVTIPKNSHKKGAKLAALQGSITSAHQVPAVSSVSHTALYTPPPEIPTTVLNIPHPSVISSPLLKSLHSAGPQLLAVSAAPPAQPLAKKKGVKRKADTTTPTPTAILAPGSPASPPGSLEAKAARLPPMRRESGRPIKPPRKDLPDSQQQHQSSKKGKLSEQLKHCNGILKELLSKKHAAYAWPFYKPVDASALGLHDYHDIIKHPMDLSTVKRKMENRDYRDAQEFAADVRLMFSNCYKYNPPDHDVVAMARKLQDVFEFRYAKMPDEPLEPGPLPVSTALPPGLAKSSSESSSEESSSESSSEEDEEEDEEEEEEEEESESSDSEEERAHRLAELQEQLRAVHEQLAALSQGPISKPKRKREKKEKKKKRKAEKHRGRAGVDEDDKGSRAPRPSQPKKSKKASGSGGGSAATLGPPGFGPSGGSGTKLPKKATKTAPPALPTGYDSEEEEESRPMSYDEKRQLSLDINKLPGEKLGRVVHIIQAREPSLRDSNPEEIEIDFETLKPSTLRELERYVLSCLRKKPRKPYTIKKPVGKTKEELALEKKRELEKRLQDVSGQLNSTKKPPKKASEKTESSSTQQVAVSRLSASSSSSDSSSSSSSSSSSDTSDSDSG</sequence>
<accession>Q5TJG6</accession>
<protein>
    <recommendedName>
        <fullName>Bromodomain-containing protein 2</fullName>
    </recommendedName>
</protein>
<proteinExistence type="inferred from homology"/>
<name>BRD2_CANLF</name>
<evidence type="ECO:0000250" key="1">
    <source>
        <dbReference type="UniProtKB" id="P25440"/>
    </source>
</evidence>
<evidence type="ECO:0000250" key="2">
    <source>
        <dbReference type="UniProtKB" id="Q7JJ13"/>
    </source>
</evidence>
<evidence type="ECO:0000255" key="3"/>
<evidence type="ECO:0000255" key="4">
    <source>
        <dbReference type="PROSITE-ProRule" id="PRU00035"/>
    </source>
</evidence>
<evidence type="ECO:0000255" key="5">
    <source>
        <dbReference type="PROSITE-ProRule" id="PRU00857"/>
    </source>
</evidence>
<evidence type="ECO:0000256" key="6">
    <source>
        <dbReference type="SAM" id="MobiDB-lite"/>
    </source>
</evidence>
<evidence type="ECO:0000305" key="7"/>
<gene>
    <name type="primary">BRD2</name>
</gene>
<dbReference type="EMBL" id="AJ630365">
    <property type="protein sequence ID" value="CAI11405.1"/>
    <property type="molecule type" value="Genomic_DNA"/>
</dbReference>
<dbReference type="RefSeq" id="NP_001041552.1">
    <property type="nucleotide sequence ID" value="NM_001048087.1"/>
</dbReference>
<dbReference type="RefSeq" id="XP_005627105.1">
    <property type="nucleotide sequence ID" value="XM_005627048.2"/>
</dbReference>
<dbReference type="RefSeq" id="XP_005627106.1">
    <property type="nucleotide sequence ID" value="XM_005627049.2"/>
</dbReference>
<dbReference type="RefSeq" id="XP_038538651.1">
    <property type="nucleotide sequence ID" value="XM_038682723.1"/>
</dbReference>
<dbReference type="RefSeq" id="XP_038538652.1">
    <property type="nucleotide sequence ID" value="XM_038682724.1"/>
</dbReference>
<dbReference type="SMR" id="Q5TJG6"/>
<dbReference type="FunCoup" id="Q5TJG6">
    <property type="interactions" value="1383"/>
</dbReference>
<dbReference type="STRING" id="9615.ENSCAFP00000001265"/>
<dbReference type="PaxDb" id="9612-ENSCAFP00000001265"/>
<dbReference type="Ensembl" id="ENSCAFT00000001379.5">
    <property type="protein sequence ID" value="ENSCAFP00000001265.3"/>
    <property type="gene ID" value="ENSCAFG00000000871.6"/>
</dbReference>
<dbReference type="Ensembl" id="ENSCAFT00030026700.1">
    <property type="protein sequence ID" value="ENSCAFP00030023306.1"/>
    <property type="gene ID" value="ENSCAFG00030014374.1"/>
</dbReference>
<dbReference type="Ensembl" id="ENSCAFT00040037292.1">
    <property type="protein sequence ID" value="ENSCAFP00040032495.1"/>
    <property type="gene ID" value="ENSCAFG00040020153.1"/>
</dbReference>
<dbReference type="Ensembl" id="ENSCAFT00845033101.1">
    <property type="protein sequence ID" value="ENSCAFP00845025912.1"/>
    <property type="gene ID" value="ENSCAFG00845018726.1"/>
</dbReference>
<dbReference type="GeneID" id="474868"/>
<dbReference type="KEGG" id="cfa:474868"/>
<dbReference type="CTD" id="6046"/>
<dbReference type="VEuPathDB" id="HostDB:ENSCAFG00845018726"/>
<dbReference type="VGNC" id="VGNC:38519">
    <property type="gene designation" value="BRD2"/>
</dbReference>
<dbReference type="eggNOG" id="KOG1474">
    <property type="taxonomic scope" value="Eukaryota"/>
</dbReference>
<dbReference type="GeneTree" id="ENSGT00940000153385"/>
<dbReference type="HOGENOM" id="CLU_001499_0_4_1"/>
<dbReference type="InParanoid" id="Q5TJG6"/>
<dbReference type="OMA" id="MAHGGMM"/>
<dbReference type="OrthoDB" id="21449at2759"/>
<dbReference type="TreeFam" id="TF317345"/>
<dbReference type="Proteomes" id="UP000002254">
    <property type="component" value="Chromosome 12"/>
</dbReference>
<dbReference type="Proteomes" id="UP000694429">
    <property type="component" value="Chromosome 12"/>
</dbReference>
<dbReference type="Proteomes" id="UP000694542">
    <property type="component" value="Chromosome 12"/>
</dbReference>
<dbReference type="Proteomes" id="UP000805418">
    <property type="component" value="Chromosome 12"/>
</dbReference>
<dbReference type="Bgee" id="ENSCAFG00000000871">
    <property type="expression patterns" value="Expressed in granulocyte and 46 other cell types or tissues"/>
</dbReference>
<dbReference type="GO" id="GO:0000785">
    <property type="term" value="C:chromatin"/>
    <property type="evidence" value="ECO:0000318"/>
    <property type="project" value="GO_Central"/>
</dbReference>
<dbReference type="GO" id="GO:0005737">
    <property type="term" value="C:cytoplasm"/>
    <property type="evidence" value="ECO:0007669"/>
    <property type="project" value="Ensembl"/>
</dbReference>
<dbReference type="GO" id="GO:0016607">
    <property type="term" value="C:nuclear speck"/>
    <property type="evidence" value="ECO:0007669"/>
    <property type="project" value="Ensembl"/>
</dbReference>
<dbReference type="GO" id="GO:0005634">
    <property type="term" value="C:nucleus"/>
    <property type="evidence" value="ECO:0000318"/>
    <property type="project" value="GO_Central"/>
</dbReference>
<dbReference type="GO" id="GO:0140015">
    <property type="term" value="F:histone H3K14ac reader activity"/>
    <property type="evidence" value="ECO:0007669"/>
    <property type="project" value="Ensembl"/>
</dbReference>
<dbReference type="GO" id="GO:0140011">
    <property type="term" value="F:histone H4K12ac reader activity"/>
    <property type="evidence" value="ECO:0007669"/>
    <property type="project" value="Ensembl"/>
</dbReference>
<dbReference type="GO" id="GO:0140012">
    <property type="term" value="F:histone H4K5ac reader activity"/>
    <property type="evidence" value="ECO:0000250"/>
    <property type="project" value="UniProtKB"/>
</dbReference>
<dbReference type="GO" id="GO:0070577">
    <property type="term" value="F:lysine-acetylated histone binding"/>
    <property type="evidence" value="ECO:0000318"/>
    <property type="project" value="GO_Central"/>
</dbReference>
<dbReference type="GO" id="GO:0004674">
    <property type="term" value="F:protein serine/threonine kinase activity"/>
    <property type="evidence" value="ECO:0007669"/>
    <property type="project" value="Ensembl"/>
</dbReference>
<dbReference type="GO" id="GO:0140588">
    <property type="term" value="P:chromatin looping"/>
    <property type="evidence" value="ECO:0000250"/>
    <property type="project" value="UniProtKB"/>
</dbReference>
<dbReference type="GO" id="GO:0006338">
    <property type="term" value="P:chromatin remodeling"/>
    <property type="evidence" value="ECO:0000318"/>
    <property type="project" value="GO_Central"/>
</dbReference>
<dbReference type="GO" id="GO:0001843">
    <property type="term" value="P:neural tube closure"/>
    <property type="evidence" value="ECO:0007669"/>
    <property type="project" value="Ensembl"/>
</dbReference>
<dbReference type="GO" id="GO:0006334">
    <property type="term" value="P:nucleosome assembly"/>
    <property type="evidence" value="ECO:0000250"/>
    <property type="project" value="UniProtKB"/>
</dbReference>
<dbReference type="GO" id="GO:2000330">
    <property type="term" value="P:positive regulation of T-helper 17 cell lineage commitment"/>
    <property type="evidence" value="ECO:0000250"/>
    <property type="project" value="UniProtKB"/>
</dbReference>
<dbReference type="GO" id="GO:0071168">
    <property type="term" value="P:protein localization to chromatin"/>
    <property type="evidence" value="ECO:0000250"/>
    <property type="project" value="UniProtKB"/>
</dbReference>
<dbReference type="GO" id="GO:0006355">
    <property type="term" value="P:regulation of DNA-templated transcription"/>
    <property type="evidence" value="ECO:0000318"/>
    <property type="project" value="GO_Central"/>
</dbReference>
<dbReference type="GO" id="GO:0006357">
    <property type="term" value="P:regulation of transcription by RNA polymerase II"/>
    <property type="evidence" value="ECO:0000250"/>
    <property type="project" value="UniProtKB"/>
</dbReference>
<dbReference type="CDD" id="cd05497">
    <property type="entry name" value="Bromo_Brdt_I_like"/>
    <property type="match status" value="1"/>
</dbReference>
<dbReference type="CDD" id="cd05498">
    <property type="entry name" value="Bromo_Brdt_II_like"/>
    <property type="match status" value="1"/>
</dbReference>
<dbReference type="FunFam" id="1.20.920.10:FF:000003">
    <property type="entry name" value="Bromodomain-containing protein 2"/>
    <property type="match status" value="1"/>
</dbReference>
<dbReference type="FunFam" id="1.20.1270.220:FF:000001">
    <property type="entry name" value="bromodomain-containing protein 2 isoform X1"/>
    <property type="match status" value="1"/>
</dbReference>
<dbReference type="FunFam" id="1.20.920.10:FF:000002">
    <property type="entry name" value="Bromodomain-containing protein 4"/>
    <property type="match status" value="1"/>
</dbReference>
<dbReference type="Gene3D" id="1.20.1270.220">
    <property type="match status" value="1"/>
</dbReference>
<dbReference type="Gene3D" id="1.20.920.10">
    <property type="entry name" value="Bromodomain-like"/>
    <property type="match status" value="2"/>
</dbReference>
<dbReference type="InterPro" id="IPR043508">
    <property type="entry name" value="Bromo_Brdt_I"/>
</dbReference>
<dbReference type="InterPro" id="IPR043509">
    <property type="entry name" value="Bromo_Brdt_II"/>
</dbReference>
<dbReference type="InterPro" id="IPR050935">
    <property type="entry name" value="Bromo_chromatin_reader"/>
</dbReference>
<dbReference type="InterPro" id="IPR001487">
    <property type="entry name" value="Bromodomain"/>
</dbReference>
<dbReference type="InterPro" id="IPR036427">
    <property type="entry name" value="Bromodomain-like_sf"/>
</dbReference>
<dbReference type="InterPro" id="IPR018359">
    <property type="entry name" value="Bromodomain_CS"/>
</dbReference>
<dbReference type="InterPro" id="IPR027353">
    <property type="entry name" value="NET_dom"/>
</dbReference>
<dbReference type="InterPro" id="IPR038336">
    <property type="entry name" value="NET_sf"/>
</dbReference>
<dbReference type="PANTHER" id="PTHR22880:SF240">
    <property type="entry name" value="BROMODOMAIN-CONTAINING PROTEIN 2"/>
    <property type="match status" value="1"/>
</dbReference>
<dbReference type="PANTHER" id="PTHR22880">
    <property type="entry name" value="FALZ-RELATED BROMODOMAIN-CONTAINING PROTEINS"/>
    <property type="match status" value="1"/>
</dbReference>
<dbReference type="Pfam" id="PF17035">
    <property type="entry name" value="BET"/>
    <property type="match status" value="1"/>
</dbReference>
<dbReference type="Pfam" id="PF00439">
    <property type="entry name" value="Bromodomain"/>
    <property type="match status" value="2"/>
</dbReference>
<dbReference type="PRINTS" id="PR00503">
    <property type="entry name" value="BROMODOMAIN"/>
</dbReference>
<dbReference type="SMART" id="SM00297">
    <property type="entry name" value="BROMO"/>
    <property type="match status" value="2"/>
</dbReference>
<dbReference type="SUPFAM" id="SSF47370">
    <property type="entry name" value="Bromodomain"/>
    <property type="match status" value="2"/>
</dbReference>
<dbReference type="PROSITE" id="PS00633">
    <property type="entry name" value="BROMODOMAIN_1"/>
    <property type="match status" value="2"/>
</dbReference>
<dbReference type="PROSITE" id="PS50014">
    <property type="entry name" value="BROMODOMAIN_2"/>
    <property type="match status" value="2"/>
</dbReference>
<dbReference type="PROSITE" id="PS51525">
    <property type="entry name" value="NET"/>
    <property type="match status" value="1"/>
</dbReference>